<evidence type="ECO:0000269" key="1">
    <source>
    </source>
</evidence>
<evidence type="ECO:0000269" key="2">
    <source>
    </source>
</evidence>
<evidence type="ECO:0000303" key="3">
    <source>
    </source>
</evidence>
<evidence type="ECO:0000303" key="4">
    <source>
    </source>
</evidence>
<evidence type="ECO:0000305" key="5"/>
<evidence type="ECO:0000312" key="6">
    <source>
        <dbReference type="EMBL" id="CAJ12536.1"/>
    </source>
</evidence>
<dbReference type="EC" id="5.1.3.38" evidence="2"/>
<dbReference type="EMBL" id="U57100">
    <property type="protein sequence ID" value="AAD11521.1"/>
    <property type="molecule type" value="Genomic_DNA"/>
</dbReference>
<dbReference type="EMBL" id="AM040265">
    <property type="protein sequence ID" value="CAJ12536.1"/>
    <property type="molecule type" value="Genomic_DNA"/>
</dbReference>
<dbReference type="RefSeq" id="WP_002965780.1">
    <property type="nucleotide sequence ID" value="NZ_KN046823.1"/>
</dbReference>
<dbReference type="SMR" id="Q2YIQ3"/>
<dbReference type="STRING" id="359391.BAB2_0370"/>
<dbReference type="KEGG" id="bmf:BAB2_0370"/>
<dbReference type="PATRIC" id="fig|359391.11.peg.2322"/>
<dbReference type="HOGENOM" id="CLU_076068_0_0_5"/>
<dbReference type="PhylomeDB" id="Q2YIQ3"/>
<dbReference type="BioCyc" id="MetaCyc:MONOMER-19886"/>
<dbReference type="UniPathway" id="UPA01066"/>
<dbReference type="Proteomes" id="UP000002719">
    <property type="component" value="Chromosome II"/>
</dbReference>
<dbReference type="GO" id="GO:0016853">
    <property type="term" value="F:isomerase activity"/>
    <property type="evidence" value="ECO:0007669"/>
    <property type="project" value="UniProtKB-KW"/>
</dbReference>
<dbReference type="GO" id="GO:0016491">
    <property type="term" value="F:oxidoreductase activity"/>
    <property type="evidence" value="ECO:0007669"/>
    <property type="project" value="UniProtKB-KW"/>
</dbReference>
<dbReference type="Gene3D" id="3.20.20.150">
    <property type="entry name" value="Divalent-metal-dependent TIM barrel enzymes"/>
    <property type="match status" value="1"/>
</dbReference>
<dbReference type="InterPro" id="IPR036237">
    <property type="entry name" value="Xyl_isomerase-like_sf"/>
</dbReference>
<dbReference type="InterPro" id="IPR013022">
    <property type="entry name" value="Xyl_isomerase-like_TIM-brl"/>
</dbReference>
<dbReference type="Pfam" id="PF01261">
    <property type="entry name" value="AP_endonuc_2"/>
    <property type="match status" value="1"/>
</dbReference>
<dbReference type="SUPFAM" id="SSF51658">
    <property type="entry name" value="Xylose isomerase-like"/>
    <property type="match status" value="1"/>
</dbReference>
<reference key="1">
    <citation type="journal article" date="2000" name="Microbiology">
        <title>The genes for erythritol catabolism are organized as an inducible operon in Brucella abortus.</title>
        <authorList>
            <person name="Sangari F.J."/>
            <person name="Aguero J."/>
            <person name="Garcia-Lobo J.M."/>
        </authorList>
    </citation>
    <scope>NUCLEOTIDE SEQUENCE [GENOMIC DNA]</scope>
    <scope>INDUCTION</scope>
    <source>
        <strain>2308</strain>
    </source>
</reference>
<reference key="2">
    <citation type="journal article" date="2005" name="Infect. Immun.">
        <title>Whole-genome analyses of speciation events in pathogenic Brucellae.</title>
        <authorList>
            <person name="Chain P.S."/>
            <person name="Comerci D.J."/>
            <person name="Tolmasky M.E."/>
            <person name="Larimer F.W."/>
            <person name="Malfatti S.A."/>
            <person name="Vergez L.M."/>
            <person name="Aguero F."/>
            <person name="Land M.L."/>
            <person name="Ugalde R.A."/>
            <person name="Garcia E."/>
        </authorList>
    </citation>
    <scope>NUCLEOTIDE SEQUENCE [LARGE SCALE GENOMIC DNA]</scope>
    <source>
        <strain>2308</strain>
    </source>
</reference>
<reference key="3">
    <citation type="journal article" date="2014" name="Proc. Natl. Acad. Sci. U.S.A.">
        <title>Erythritol feeds the pentose phosphate pathway via three new isomerases leading to D-erythrose-4-phosphate in Brucella.</title>
        <authorList>
            <person name="Barbier T."/>
            <person name="Collard F."/>
            <person name="Zuniga-Ripa A."/>
            <person name="Moriyon I."/>
            <person name="Godard T."/>
            <person name="Becker J."/>
            <person name="Wittmann C."/>
            <person name="Van Schaftingen E."/>
            <person name="Letesson J.J."/>
        </authorList>
    </citation>
    <scope>FUNCTION</scope>
    <scope>CATALYTIC ACTIVITY</scope>
    <scope>PATHWAY</scope>
    <source>
        <strain>2308</strain>
    </source>
</reference>
<name>ERYC_BRUA2</name>
<accession>Q2YIQ3</accession>
<accession>Q9ZB30</accession>
<organism>
    <name type="scientific">Brucella abortus (strain 2308)</name>
    <dbReference type="NCBI Taxonomy" id="359391"/>
    <lineage>
        <taxon>Bacteria</taxon>
        <taxon>Pseudomonadati</taxon>
        <taxon>Pseudomonadota</taxon>
        <taxon>Alphaproteobacteria</taxon>
        <taxon>Hyphomicrobiales</taxon>
        <taxon>Brucellaceae</taxon>
        <taxon>Brucella/Ochrobactrum group</taxon>
        <taxon>Brucella</taxon>
    </lineage>
</organism>
<feature type="chain" id="PRO_0000446539" description="D-erythrulose 1-phosphate 3-epimerase">
    <location>
        <begin position="1"/>
        <end position="310"/>
    </location>
</feature>
<feature type="sequence conflict" description="In Ref. 1; AAD11521." evidence="5" ref="1">
    <original>G</original>
    <variation>A</variation>
    <location>
        <position position="106"/>
    </location>
</feature>
<feature type="sequence conflict" description="In Ref. 1; AAD11521." evidence="5" ref="1">
    <original>EG</original>
    <variation>D</variation>
    <location>
        <begin position="262"/>
        <end position="263"/>
    </location>
</feature>
<keyword id="KW-0413">Isomerase</keyword>
<keyword id="KW-0560">Oxidoreductase</keyword>
<keyword id="KW-1185">Reference proteome</keyword>
<sequence length="310" mass="35011">MALTLSLNTNPLVNRFAEPDDLIETVARDLRLRDLQLTHEFINPSWQASTIRRLTRDMDRALQRTGVRVTSGMTGPYGRLNHFGHPDRDVRRYYVDWFKTFADIIGDLGGKSVGTQFAIFTYKDFDDPARREELIKIAIDCWAEVAEHAAGAGLDYVFWEPMSIGREFGETIAECMKLQDRLTAANMAIPMWMMADIDHGDVTSANPDDYDPYAWARTVPKVSPIIHIKQSLMDKGGHRPFTAAFNAKGRIQPEPLLKAFAEGGAVDNEICLELSFKEREPNDREVIPQIAESVAFWAPHIDTGAKDLKI</sequence>
<gene>
    <name evidence="3" type="primary">eryC</name>
    <name evidence="6" type="ordered locus">BAB2_0370</name>
</gene>
<comment type="function">
    <text evidence="2">Catalyzes the racemization of D-erythrulose 1-phosphate to L-erythrulose 1-phosphate.</text>
</comment>
<comment type="catalytic activity">
    <reaction evidence="2">
        <text>D-erythrulose 1-phosphate = L-erythrulose 1-phosphate</text>
        <dbReference type="Rhea" id="RHEA:49584"/>
        <dbReference type="ChEBI" id="CHEBI:58002"/>
        <dbReference type="ChEBI" id="CHEBI:131767"/>
        <dbReference type="EC" id="5.1.3.38"/>
    </reaction>
</comment>
<comment type="pathway">
    <text evidence="2">Carbohydrate metabolism; erythritol degradation.</text>
</comment>
<comment type="induction">
    <text evidence="1">Induced by erythritol and repressed by EryD.</text>
</comment>
<protein>
    <recommendedName>
        <fullName evidence="5">D-erythrulose 1-phosphate 3-epimerase</fullName>
        <ecNumber evidence="2">5.1.3.38</ecNumber>
    </recommendedName>
    <alternativeName>
        <fullName evidence="4">3-tetrulose-4-phosphate racemase</fullName>
    </alternativeName>
</protein>
<proteinExistence type="evidence at protein level"/>